<reference key="1">
    <citation type="journal article" date="2008" name="Nat. Biotechnol.">
        <title>Genome sequencing and analysis of the filamentous fungus Penicillium chrysogenum.</title>
        <authorList>
            <person name="van den Berg M.A."/>
            <person name="Albang R."/>
            <person name="Albermann K."/>
            <person name="Badger J.H."/>
            <person name="Daran J.-M."/>
            <person name="Driessen A.J.M."/>
            <person name="Garcia-Estrada C."/>
            <person name="Fedorova N.D."/>
            <person name="Harris D.M."/>
            <person name="Heijne W.H.M."/>
            <person name="Joardar V.S."/>
            <person name="Kiel J.A.K.W."/>
            <person name="Kovalchuk A."/>
            <person name="Martin J.F."/>
            <person name="Nierman W.C."/>
            <person name="Nijland J.G."/>
            <person name="Pronk J.T."/>
            <person name="Roubos J.A."/>
            <person name="van der Klei I.J."/>
            <person name="van Peij N.N.M.E."/>
            <person name="Veenhuis M."/>
            <person name="von Doehren H."/>
            <person name="Wagner C."/>
            <person name="Wortman J.R."/>
            <person name="Bovenberg R.A.L."/>
        </authorList>
    </citation>
    <scope>NUCLEOTIDE SEQUENCE [LARGE SCALE GENOMIC DNA]</scope>
    <source>
        <strain>ATCC 28089 / DSM 1075 / NRRL 1951 / Wisconsin 54-1255</strain>
    </source>
</reference>
<name>GUF1_PENRW</name>
<comment type="function">
    <text evidence="1">Promotes mitochondrial protein synthesis. May act as a fidelity factor of the translation reaction, by catalyzing a one-codon backward translocation of tRNAs on improperly translocated ribosomes. Binds to mitochondrial ribosomes in a GTP-dependent manner.</text>
</comment>
<comment type="catalytic activity">
    <reaction evidence="1">
        <text>GTP + H2O = GDP + phosphate + H(+)</text>
        <dbReference type="Rhea" id="RHEA:19669"/>
        <dbReference type="ChEBI" id="CHEBI:15377"/>
        <dbReference type="ChEBI" id="CHEBI:15378"/>
        <dbReference type="ChEBI" id="CHEBI:37565"/>
        <dbReference type="ChEBI" id="CHEBI:43474"/>
        <dbReference type="ChEBI" id="CHEBI:58189"/>
    </reaction>
</comment>
<comment type="subcellular location">
    <subcellularLocation>
        <location evidence="1">Mitochondrion inner membrane</location>
        <topology evidence="1">Peripheral membrane protein</topology>
        <orientation evidence="1">Matrix side</orientation>
    </subcellularLocation>
</comment>
<comment type="similarity">
    <text evidence="2">Belongs to the TRAFAC class translation factor GTPase superfamily. Classic translation factor GTPase family. LepA subfamily.</text>
</comment>
<proteinExistence type="inferred from homology"/>
<sequence>MRGCLQLGRWLSAAPRCQAASLRPPTVFPSYRYNRSFSTTTIYYGRSKTTPTKLDLDLEKRIAAIPIERFRNFCIVAHVDHGKSTLSDRLLELTGTIEAGTNKQVLDKLDVERERGITVKAQTCTMIYNYKGEDYLLHLVDTPGHVDFRAEVSRSYASCGGAILLVDASQGVQAQTVANFYLAFAQGLELIPILNKVDLPSSDPERALEQIKNTFEIDTDKAVMVSAKTGLNVPAVLPTVVEKVPAPIGDSTKPLRMLLVDSWYDSYKGVILLVRVFDGEVRAGQQLISFVTGLKYFVGEVGIMYPTETAQTVLRAGQVGYIYFNPGMKRSKEAKIGDTFTRVGYEKVVEPLPGFEEPKSMVFVAVYPVNADLFEHLEDSINQLVLNDRSITVQKESSEALGAGFRMGFLGTLHCSVFEDRLRQEHGASIIITPPSVPVKVVWKSGAEEIITNPAKFPDDDSVRLKVAEVQEPFVLVTLTFPEEYLGKVIELCEANRGEQQSIEYFTATQVIMKYELPLAHLVDDFFGKLKGGTKGYASLDYEESAWRAGNIVRLQLLVNREPVDAVTRIMHSSQVSRQGRIWVTKFKEHVDRQLFEIIIQAAVGKKIIARETIKPYRKDVLAKLHASDVSRRRKLLEKQKEGRKRLRAVGNVVIEHKAFQAFLAK</sequence>
<gene>
    <name type="primary">guf1</name>
    <name type="ORF">Pc13g15180</name>
</gene>
<feature type="transit peptide" description="Mitochondrion" evidence="1">
    <location>
        <begin position="1"/>
        <end position="44"/>
    </location>
</feature>
<feature type="chain" id="PRO_5000408964" description="Translation factor guf1, mitochondrial">
    <location>
        <begin position="45"/>
        <end position="666"/>
    </location>
</feature>
<feature type="domain" description="tr-type G">
    <location>
        <begin position="68"/>
        <end position="248"/>
    </location>
</feature>
<feature type="binding site" evidence="1">
    <location>
        <begin position="77"/>
        <end position="84"/>
    </location>
    <ligand>
        <name>GTP</name>
        <dbReference type="ChEBI" id="CHEBI:37565"/>
    </ligand>
</feature>
<feature type="binding site" evidence="1">
    <location>
        <begin position="141"/>
        <end position="145"/>
    </location>
    <ligand>
        <name>GTP</name>
        <dbReference type="ChEBI" id="CHEBI:37565"/>
    </ligand>
</feature>
<feature type="binding site" evidence="1">
    <location>
        <begin position="195"/>
        <end position="198"/>
    </location>
    <ligand>
        <name>GTP</name>
        <dbReference type="ChEBI" id="CHEBI:37565"/>
    </ligand>
</feature>
<protein>
    <recommendedName>
        <fullName evidence="1">Translation factor guf1, mitochondrial</fullName>
        <ecNumber>3.6.5.-</ecNumber>
    </recommendedName>
    <alternativeName>
        <fullName evidence="1">Elongation factor 4 homolog</fullName>
        <shortName evidence="1">EF-4</shortName>
    </alternativeName>
    <alternativeName>
        <fullName evidence="1">GTPase guf1</fullName>
    </alternativeName>
    <alternativeName>
        <fullName evidence="1">Ribosomal back-translocase</fullName>
    </alternativeName>
</protein>
<evidence type="ECO:0000255" key="1">
    <source>
        <dbReference type="HAMAP-Rule" id="MF_03137"/>
    </source>
</evidence>
<evidence type="ECO:0000305" key="2"/>
<dbReference type="EC" id="3.6.5.-"/>
<dbReference type="EMBL" id="AM920428">
    <property type="protein sequence ID" value="CAP92587.1"/>
    <property type="molecule type" value="Genomic_DNA"/>
</dbReference>
<dbReference type="RefSeq" id="XP_002559914.1">
    <property type="nucleotide sequence ID" value="XM_002559868.1"/>
</dbReference>
<dbReference type="SMR" id="B6H2S6"/>
<dbReference type="STRING" id="500485.B6H2S6"/>
<dbReference type="GeneID" id="8314023"/>
<dbReference type="KEGG" id="pcs:N7525_002525"/>
<dbReference type="VEuPathDB" id="FungiDB:PCH_Pc13g15180"/>
<dbReference type="eggNOG" id="KOG0462">
    <property type="taxonomic scope" value="Eukaryota"/>
</dbReference>
<dbReference type="HOGENOM" id="CLU_009995_3_1_1"/>
<dbReference type="OMA" id="QVKCDEN"/>
<dbReference type="OrthoDB" id="1074at2759"/>
<dbReference type="BioCyc" id="PCHR:PC13G15180-MONOMER"/>
<dbReference type="Proteomes" id="UP000000724">
    <property type="component" value="Contig Pc00c13"/>
</dbReference>
<dbReference type="GO" id="GO:0005743">
    <property type="term" value="C:mitochondrial inner membrane"/>
    <property type="evidence" value="ECO:0007669"/>
    <property type="project" value="UniProtKB-SubCell"/>
</dbReference>
<dbReference type="GO" id="GO:0005759">
    <property type="term" value="C:mitochondrial matrix"/>
    <property type="evidence" value="ECO:0007669"/>
    <property type="project" value="UniProtKB-UniRule"/>
</dbReference>
<dbReference type="GO" id="GO:0005525">
    <property type="term" value="F:GTP binding"/>
    <property type="evidence" value="ECO:0007669"/>
    <property type="project" value="UniProtKB-UniRule"/>
</dbReference>
<dbReference type="GO" id="GO:0003924">
    <property type="term" value="F:GTPase activity"/>
    <property type="evidence" value="ECO:0007669"/>
    <property type="project" value="UniProtKB-UniRule"/>
</dbReference>
<dbReference type="GO" id="GO:0097177">
    <property type="term" value="F:mitochondrial ribosome binding"/>
    <property type="evidence" value="ECO:0007669"/>
    <property type="project" value="TreeGrafter"/>
</dbReference>
<dbReference type="GO" id="GO:0045727">
    <property type="term" value="P:positive regulation of translation"/>
    <property type="evidence" value="ECO:0007669"/>
    <property type="project" value="UniProtKB-UniRule"/>
</dbReference>
<dbReference type="GO" id="GO:0006412">
    <property type="term" value="P:translation"/>
    <property type="evidence" value="ECO:0007669"/>
    <property type="project" value="UniProtKB-KW"/>
</dbReference>
<dbReference type="CDD" id="cd03699">
    <property type="entry name" value="EF4_II"/>
    <property type="match status" value="1"/>
</dbReference>
<dbReference type="CDD" id="cd01890">
    <property type="entry name" value="LepA"/>
    <property type="match status" value="1"/>
</dbReference>
<dbReference type="CDD" id="cd03709">
    <property type="entry name" value="lepA_C"/>
    <property type="match status" value="1"/>
</dbReference>
<dbReference type="FunFam" id="3.40.50.300:FF:000078">
    <property type="entry name" value="Elongation factor 4"/>
    <property type="match status" value="1"/>
</dbReference>
<dbReference type="FunFam" id="2.40.30.10:FF:000015">
    <property type="entry name" value="Translation factor GUF1, mitochondrial"/>
    <property type="match status" value="1"/>
</dbReference>
<dbReference type="FunFam" id="3.30.70.240:FF:000007">
    <property type="entry name" value="Translation factor GUF1, mitochondrial"/>
    <property type="match status" value="1"/>
</dbReference>
<dbReference type="FunFam" id="3.30.70.2570:FF:000001">
    <property type="entry name" value="Translation factor GUF1, mitochondrial"/>
    <property type="match status" value="1"/>
</dbReference>
<dbReference type="FunFam" id="3.30.70.870:FF:000004">
    <property type="entry name" value="Translation factor GUF1, mitochondrial"/>
    <property type="match status" value="1"/>
</dbReference>
<dbReference type="Gene3D" id="3.30.70.240">
    <property type="match status" value="1"/>
</dbReference>
<dbReference type="Gene3D" id="3.30.70.2570">
    <property type="entry name" value="Elongation factor 4, C-terminal domain"/>
    <property type="match status" value="1"/>
</dbReference>
<dbReference type="Gene3D" id="3.30.70.870">
    <property type="entry name" value="Elongation Factor G (Translational Gtpase), domain 3"/>
    <property type="match status" value="1"/>
</dbReference>
<dbReference type="Gene3D" id="3.40.50.300">
    <property type="entry name" value="P-loop containing nucleotide triphosphate hydrolases"/>
    <property type="match status" value="1"/>
</dbReference>
<dbReference type="Gene3D" id="2.40.30.10">
    <property type="entry name" value="Translation factors"/>
    <property type="match status" value="1"/>
</dbReference>
<dbReference type="HAMAP" id="MF_00071">
    <property type="entry name" value="LepA"/>
    <property type="match status" value="1"/>
</dbReference>
<dbReference type="InterPro" id="IPR006297">
    <property type="entry name" value="EF-4"/>
</dbReference>
<dbReference type="InterPro" id="IPR035647">
    <property type="entry name" value="EFG_III/V"/>
</dbReference>
<dbReference type="InterPro" id="IPR000640">
    <property type="entry name" value="EFG_V-like"/>
</dbReference>
<dbReference type="InterPro" id="IPR031157">
    <property type="entry name" value="G_TR_CS"/>
</dbReference>
<dbReference type="InterPro" id="IPR038363">
    <property type="entry name" value="LepA_C_sf"/>
</dbReference>
<dbReference type="InterPro" id="IPR013842">
    <property type="entry name" value="LepA_CTD"/>
</dbReference>
<dbReference type="InterPro" id="IPR035654">
    <property type="entry name" value="LepA_IV"/>
</dbReference>
<dbReference type="InterPro" id="IPR027417">
    <property type="entry name" value="P-loop_NTPase"/>
</dbReference>
<dbReference type="InterPro" id="IPR005225">
    <property type="entry name" value="Small_GTP-bd"/>
</dbReference>
<dbReference type="InterPro" id="IPR000795">
    <property type="entry name" value="T_Tr_GTP-bd_dom"/>
</dbReference>
<dbReference type="InterPro" id="IPR009000">
    <property type="entry name" value="Transl_B-barrel_sf"/>
</dbReference>
<dbReference type="NCBIfam" id="TIGR01393">
    <property type="entry name" value="lepA"/>
    <property type="match status" value="1"/>
</dbReference>
<dbReference type="NCBIfam" id="TIGR00231">
    <property type="entry name" value="small_GTP"/>
    <property type="match status" value="1"/>
</dbReference>
<dbReference type="PANTHER" id="PTHR43512:SF7">
    <property type="entry name" value="TRANSLATION FACTOR GUF1, MITOCHONDRIAL"/>
    <property type="match status" value="1"/>
</dbReference>
<dbReference type="PANTHER" id="PTHR43512">
    <property type="entry name" value="TRANSLATION FACTOR GUF1-RELATED"/>
    <property type="match status" value="1"/>
</dbReference>
<dbReference type="Pfam" id="PF00679">
    <property type="entry name" value="EFG_C"/>
    <property type="match status" value="1"/>
</dbReference>
<dbReference type="Pfam" id="PF00009">
    <property type="entry name" value="GTP_EFTU"/>
    <property type="match status" value="1"/>
</dbReference>
<dbReference type="Pfam" id="PF06421">
    <property type="entry name" value="LepA_C"/>
    <property type="match status" value="1"/>
</dbReference>
<dbReference type="PRINTS" id="PR00315">
    <property type="entry name" value="ELONGATNFCT"/>
</dbReference>
<dbReference type="SUPFAM" id="SSF54980">
    <property type="entry name" value="EF-G C-terminal domain-like"/>
    <property type="match status" value="2"/>
</dbReference>
<dbReference type="SUPFAM" id="SSF52540">
    <property type="entry name" value="P-loop containing nucleoside triphosphate hydrolases"/>
    <property type="match status" value="1"/>
</dbReference>
<dbReference type="SUPFAM" id="SSF50447">
    <property type="entry name" value="Translation proteins"/>
    <property type="match status" value="1"/>
</dbReference>
<dbReference type="PROSITE" id="PS00301">
    <property type="entry name" value="G_TR_1"/>
    <property type="match status" value="1"/>
</dbReference>
<dbReference type="PROSITE" id="PS51722">
    <property type="entry name" value="G_TR_2"/>
    <property type="match status" value="1"/>
</dbReference>
<organism>
    <name type="scientific">Penicillium rubens (strain ATCC 28089 / DSM 1075 / NRRL 1951 / Wisconsin 54-1255)</name>
    <name type="common">Penicillium chrysogenum</name>
    <dbReference type="NCBI Taxonomy" id="500485"/>
    <lineage>
        <taxon>Eukaryota</taxon>
        <taxon>Fungi</taxon>
        <taxon>Dikarya</taxon>
        <taxon>Ascomycota</taxon>
        <taxon>Pezizomycotina</taxon>
        <taxon>Eurotiomycetes</taxon>
        <taxon>Eurotiomycetidae</taxon>
        <taxon>Eurotiales</taxon>
        <taxon>Aspergillaceae</taxon>
        <taxon>Penicillium</taxon>
        <taxon>Penicillium chrysogenum species complex</taxon>
    </lineage>
</organism>
<accession>B6H2S6</accession>
<keyword id="KW-0342">GTP-binding</keyword>
<keyword id="KW-0378">Hydrolase</keyword>
<keyword id="KW-0472">Membrane</keyword>
<keyword id="KW-0496">Mitochondrion</keyword>
<keyword id="KW-0999">Mitochondrion inner membrane</keyword>
<keyword id="KW-0547">Nucleotide-binding</keyword>
<keyword id="KW-0648">Protein biosynthesis</keyword>
<keyword id="KW-1185">Reference proteome</keyword>
<keyword id="KW-0809">Transit peptide</keyword>